<sequence length="151" mass="15948">MLKEFKEFAMKGNVVDMAVGIIVGGAFGTIVNTLVSQVLMPPLGLLIGGVDFTNLYLILKEGSKAAAPYAALADATAAGAVTVNYGLFLNSVISFLIMAFAVFLLVKAINMLRREEKAPPLAPTTKECPYCLSIVPLKATRCSSCTSELGK</sequence>
<reference key="1">
    <citation type="submission" date="2008-06" db="EMBL/GenBank/DDBJ databases">
        <title>Complete sequence of Pelodictyon phaeoclathratiforme BU-1.</title>
        <authorList>
            <consortium name="US DOE Joint Genome Institute"/>
            <person name="Lucas S."/>
            <person name="Copeland A."/>
            <person name="Lapidus A."/>
            <person name="Glavina del Rio T."/>
            <person name="Dalin E."/>
            <person name="Tice H."/>
            <person name="Bruce D."/>
            <person name="Goodwin L."/>
            <person name="Pitluck S."/>
            <person name="Schmutz J."/>
            <person name="Larimer F."/>
            <person name="Land M."/>
            <person name="Hauser L."/>
            <person name="Kyrpides N."/>
            <person name="Mikhailova N."/>
            <person name="Liu Z."/>
            <person name="Li T."/>
            <person name="Zhao F."/>
            <person name="Overmann J."/>
            <person name="Bryant D.A."/>
            <person name="Richardson P."/>
        </authorList>
    </citation>
    <scope>NUCLEOTIDE SEQUENCE [LARGE SCALE GENOMIC DNA]</scope>
    <source>
        <strain>DSM 5477 / BU-1</strain>
    </source>
</reference>
<organism>
    <name type="scientific">Pelodictyon phaeoclathratiforme (strain DSM 5477 / BU-1)</name>
    <dbReference type="NCBI Taxonomy" id="324925"/>
    <lineage>
        <taxon>Bacteria</taxon>
        <taxon>Pseudomonadati</taxon>
        <taxon>Chlorobiota</taxon>
        <taxon>Chlorobiia</taxon>
        <taxon>Chlorobiales</taxon>
        <taxon>Chlorobiaceae</taxon>
        <taxon>Chlorobium/Pelodictyon group</taxon>
        <taxon>Pelodictyon</taxon>
    </lineage>
</organism>
<keyword id="KW-0997">Cell inner membrane</keyword>
<keyword id="KW-1003">Cell membrane</keyword>
<keyword id="KW-0407">Ion channel</keyword>
<keyword id="KW-0406">Ion transport</keyword>
<keyword id="KW-0472">Membrane</keyword>
<keyword id="KW-1185">Reference proteome</keyword>
<keyword id="KW-0812">Transmembrane</keyword>
<keyword id="KW-1133">Transmembrane helix</keyword>
<keyword id="KW-0813">Transport</keyword>
<comment type="function">
    <text evidence="1">Channel that opens in response to stretch forces in the membrane lipid bilayer. May participate in the regulation of osmotic pressure changes within the cell.</text>
</comment>
<comment type="subunit">
    <text evidence="1">Homopentamer.</text>
</comment>
<comment type="subcellular location">
    <subcellularLocation>
        <location evidence="1">Cell inner membrane</location>
        <topology evidence="1">Multi-pass membrane protein</topology>
    </subcellularLocation>
</comment>
<comment type="similarity">
    <text evidence="1">Belongs to the MscL family.</text>
</comment>
<feature type="chain" id="PRO_1000094910" description="Large-conductance mechanosensitive channel">
    <location>
        <begin position="1"/>
        <end position="151"/>
    </location>
</feature>
<feature type="transmembrane region" description="Helical" evidence="1">
    <location>
        <begin position="14"/>
        <end position="34"/>
    </location>
</feature>
<feature type="transmembrane region" description="Helical" evidence="1">
    <location>
        <begin position="38"/>
        <end position="58"/>
    </location>
</feature>
<feature type="transmembrane region" description="Helical" evidence="1">
    <location>
        <begin position="86"/>
        <end position="106"/>
    </location>
</feature>
<proteinExistence type="inferred from homology"/>
<dbReference type="EMBL" id="CP001110">
    <property type="protein sequence ID" value="ACF44939.1"/>
    <property type="molecule type" value="Genomic_DNA"/>
</dbReference>
<dbReference type="RefSeq" id="WP_012509407.1">
    <property type="nucleotide sequence ID" value="NC_011060.1"/>
</dbReference>
<dbReference type="STRING" id="324925.Ppha_2788"/>
<dbReference type="KEGG" id="pph:Ppha_2788"/>
<dbReference type="eggNOG" id="COG1970">
    <property type="taxonomic scope" value="Bacteria"/>
</dbReference>
<dbReference type="HOGENOM" id="CLU_095787_2_3_10"/>
<dbReference type="OrthoDB" id="9810350at2"/>
<dbReference type="Proteomes" id="UP000002724">
    <property type="component" value="Chromosome"/>
</dbReference>
<dbReference type="GO" id="GO:0005886">
    <property type="term" value="C:plasma membrane"/>
    <property type="evidence" value="ECO:0007669"/>
    <property type="project" value="UniProtKB-SubCell"/>
</dbReference>
<dbReference type="GO" id="GO:0008381">
    <property type="term" value="F:mechanosensitive monoatomic ion channel activity"/>
    <property type="evidence" value="ECO:0007669"/>
    <property type="project" value="UniProtKB-UniRule"/>
</dbReference>
<dbReference type="Gene3D" id="1.10.1200.120">
    <property type="entry name" value="Large-conductance mechanosensitive channel, MscL, domain 1"/>
    <property type="match status" value="1"/>
</dbReference>
<dbReference type="HAMAP" id="MF_00115">
    <property type="entry name" value="MscL"/>
    <property type="match status" value="1"/>
</dbReference>
<dbReference type="InterPro" id="IPR019823">
    <property type="entry name" value="Mechanosensitive_channel_CS"/>
</dbReference>
<dbReference type="InterPro" id="IPR001185">
    <property type="entry name" value="MS_channel"/>
</dbReference>
<dbReference type="InterPro" id="IPR037673">
    <property type="entry name" value="MSC/AndL"/>
</dbReference>
<dbReference type="InterPro" id="IPR036019">
    <property type="entry name" value="MscL_channel"/>
</dbReference>
<dbReference type="NCBIfam" id="TIGR00220">
    <property type="entry name" value="mscL"/>
    <property type="match status" value="1"/>
</dbReference>
<dbReference type="NCBIfam" id="NF001843">
    <property type="entry name" value="PRK00567.1-4"/>
    <property type="match status" value="1"/>
</dbReference>
<dbReference type="PANTHER" id="PTHR30266:SF2">
    <property type="entry name" value="LARGE-CONDUCTANCE MECHANOSENSITIVE CHANNEL"/>
    <property type="match status" value="1"/>
</dbReference>
<dbReference type="PANTHER" id="PTHR30266">
    <property type="entry name" value="MECHANOSENSITIVE CHANNEL MSCL"/>
    <property type="match status" value="1"/>
</dbReference>
<dbReference type="Pfam" id="PF01741">
    <property type="entry name" value="MscL"/>
    <property type="match status" value="1"/>
</dbReference>
<dbReference type="PRINTS" id="PR01264">
    <property type="entry name" value="MECHCHANNEL"/>
</dbReference>
<dbReference type="SUPFAM" id="SSF81330">
    <property type="entry name" value="Gated mechanosensitive channel"/>
    <property type="match status" value="1"/>
</dbReference>
<dbReference type="PROSITE" id="PS01327">
    <property type="entry name" value="MSCL"/>
    <property type="match status" value="1"/>
</dbReference>
<accession>B4SGK3</accession>
<protein>
    <recommendedName>
        <fullName evidence="1">Large-conductance mechanosensitive channel</fullName>
    </recommendedName>
</protein>
<evidence type="ECO:0000255" key="1">
    <source>
        <dbReference type="HAMAP-Rule" id="MF_00115"/>
    </source>
</evidence>
<gene>
    <name evidence="1" type="primary">mscL</name>
    <name type="ordered locus">Ppha_2788</name>
</gene>
<name>MSCL_PELPB</name>